<comment type="function">
    <text evidence="1">Adapter protein implicated in the regulation of a large spectrum of both general and specialized signaling pathways. Binds to a large number of partners, usually by recognition of a phosphoserine or phosphothreonine motif. Binding generally results in the modulation of the activity of the binding partner.</text>
</comment>
<comment type="subunit">
    <text evidence="1">Homodimer, and heterodimer with other family members.</text>
</comment>
<comment type="interaction">
    <interactant intactId="EBI-1635853">
        <id>Q5F3W6</id>
    </interactant>
    <interactant intactId="EBI-1635766">
        <id>Q8AYS8</id>
        <label>KCNMA1</label>
    </interactant>
    <organismsDiffer>false</organismsDiffer>
    <experiments>3</experiments>
</comment>
<comment type="subcellular location">
    <subcellularLocation>
        <location evidence="2">Cytoplasm</location>
    </subcellularLocation>
</comment>
<comment type="similarity">
    <text evidence="3">Belongs to the 14-3-3 family.</text>
</comment>
<evidence type="ECO:0000250" key="1">
    <source>
        <dbReference type="UniProtKB" id="P61981"/>
    </source>
</evidence>
<evidence type="ECO:0000250" key="2">
    <source>
        <dbReference type="UniProtKB" id="P68252"/>
    </source>
</evidence>
<evidence type="ECO:0000305" key="3"/>
<name>1433G_CHICK</name>
<feature type="chain" id="PRO_0000058611" description="14-3-3 protein gamma">
    <location>
        <begin position="1"/>
        <end position="247"/>
    </location>
</feature>
<feature type="site" description="Interaction with phosphoserine on interacting protein" evidence="1">
    <location>
        <position position="57"/>
    </location>
</feature>
<feature type="site" description="Interaction with phosphoserine on interacting protein" evidence="1">
    <location>
        <position position="132"/>
    </location>
</feature>
<gene>
    <name type="primary">YWHAG</name>
    <name type="ORF">RCJMB04_5e12</name>
</gene>
<protein>
    <recommendedName>
        <fullName>14-3-3 protein gamma</fullName>
    </recommendedName>
</protein>
<sequence>MVDREQLVQKARLAEQAERYDDMAAAMKNVTELNEPLSNEERNLLSVAYKNVVGARRSSWRVISSIEQKTSADGNEKKIEMVRAYREKIEKELGAVCQDVLSLLDNYLIKNCSETQYESKVFYLKMKGDYYRYLAEVATGEKRATVVESSEKAYSEAHEISKEHMQPTHPIRLGLALNYSVFYYEIQNAPEQACHLAKTAFDDAIAELDTLNEDSYKDSTLIMQLLRDNLTLWTSDQQDDDGGEGNN</sequence>
<keyword id="KW-0963">Cytoplasm</keyword>
<keyword id="KW-1185">Reference proteome</keyword>
<organism>
    <name type="scientific">Gallus gallus</name>
    <name type="common">Chicken</name>
    <dbReference type="NCBI Taxonomy" id="9031"/>
    <lineage>
        <taxon>Eukaryota</taxon>
        <taxon>Metazoa</taxon>
        <taxon>Chordata</taxon>
        <taxon>Craniata</taxon>
        <taxon>Vertebrata</taxon>
        <taxon>Euteleostomi</taxon>
        <taxon>Archelosauria</taxon>
        <taxon>Archosauria</taxon>
        <taxon>Dinosauria</taxon>
        <taxon>Saurischia</taxon>
        <taxon>Theropoda</taxon>
        <taxon>Coelurosauria</taxon>
        <taxon>Aves</taxon>
        <taxon>Neognathae</taxon>
        <taxon>Galloanserae</taxon>
        <taxon>Galliformes</taxon>
        <taxon>Phasianidae</taxon>
        <taxon>Phasianinae</taxon>
        <taxon>Gallus</taxon>
    </lineage>
</organism>
<dbReference type="EMBL" id="AJ851534">
    <property type="protein sequence ID" value="CAH65168.1"/>
    <property type="molecule type" value="mRNA"/>
</dbReference>
<dbReference type="RefSeq" id="NP_001026648.1">
    <property type="nucleotide sequence ID" value="NM_001031477.1"/>
</dbReference>
<dbReference type="SMR" id="Q5F3W6"/>
<dbReference type="BioGRID" id="687033">
    <property type="interactions" value="2"/>
</dbReference>
<dbReference type="FunCoup" id="Q5F3W6">
    <property type="interactions" value="2043"/>
</dbReference>
<dbReference type="IntAct" id="Q5F3W6">
    <property type="interactions" value="1"/>
</dbReference>
<dbReference type="STRING" id="9031.ENSGALP00000027989"/>
<dbReference type="PaxDb" id="9031-ENSGALP00000027989"/>
<dbReference type="GeneID" id="427820"/>
<dbReference type="KEGG" id="gga:427820"/>
<dbReference type="CTD" id="7532"/>
<dbReference type="VEuPathDB" id="HostDB:geneid_427820"/>
<dbReference type="eggNOG" id="KOG0841">
    <property type="taxonomic scope" value="Eukaryota"/>
</dbReference>
<dbReference type="InParanoid" id="Q5F3W6"/>
<dbReference type="OrthoDB" id="10260625at2759"/>
<dbReference type="PhylomeDB" id="Q5F3W6"/>
<dbReference type="PRO" id="PR:Q5F3W6"/>
<dbReference type="Proteomes" id="UP000000539">
    <property type="component" value="Unassembled WGS sequence"/>
</dbReference>
<dbReference type="GO" id="GO:0005737">
    <property type="term" value="C:cytoplasm"/>
    <property type="evidence" value="ECO:0000318"/>
    <property type="project" value="GO_Central"/>
</dbReference>
<dbReference type="GO" id="GO:0140031">
    <property type="term" value="F:phosphorylation-dependent protein binding"/>
    <property type="evidence" value="ECO:0000250"/>
    <property type="project" value="UniProtKB"/>
</dbReference>
<dbReference type="GO" id="GO:0005080">
    <property type="term" value="F:protein kinase C binding"/>
    <property type="evidence" value="ECO:0000318"/>
    <property type="project" value="GO_Central"/>
</dbReference>
<dbReference type="GO" id="GO:0140311">
    <property type="term" value="F:protein sequestering activity"/>
    <property type="evidence" value="ECO:0000250"/>
    <property type="project" value="UniProtKB"/>
</dbReference>
<dbReference type="GO" id="GO:0008104">
    <property type="term" value="P:protein localization"/>
    <property type="evidence" value="ECO:0000318"/>
    <property type="project" value="GO_Central"/>
</dbReference>
<dbReference type="GO" id="GO:0007165">
    <property type="term" value="P:signal transduction"/>
    <property type="evidence" value="ECO:0000318"/>
    <property type="project" value="GO_Central"/>
</dbReference>
<dbReference type="CDD" id="cd10024">
    <property type="entry name" value="14-3-3_gamma"/>
    <property type="match status" value="1"/>
</dbReference>
<dbReference type="FunFam" id="1.20.190.20:FF:000001">
    <property type="entry name" value="14-3-3 gamma 1"/>
    <property type="match status" value="1"/>
</dbReference>
<dbReference type="Gene3D" id="1.20.190.20">
    <property type="entry name" value="14-3-3 domain"/>
    <property type="match status" value="1"/>
</dbReference>
<dbReference type="InterPro" id="IPR000308">
    <property type="entry name" value="14-3-3"/>
</dbReference>
<dbReference type="InterPro" id="IPR023409">
    <property type="entry name" value="14-3-3_CS"/>
</dbReference>
<dbReference type="InterPro" id="IPR036815">
    <property type="entry name" value="14-3-3_dom_sf"/>
</dbReference>
<dbReference type="InterPro" id="IPR023410">
    <property type="entry name" value="14-3-3_domain"/>
</dbReference>
<dbReference type="PANTHER" id="PTHR18860">
    <property type="entry name" value="14-3-3 PROTEIN"/>
    <property type="match status" value="1"/>
</dbReference>
<dbReference type="Pfam" id="PF00244">
    <property type="entry name" value="14-3-3"/>
    <property type="match status" value="1"/>
</dbReference>
<dbReference type="PIRSF" id="PIRSF000868">
    <property type="entry name" value="14-3-3"/>
    <property type="match status" value="1"/>
</dbReference>
<dbReference type="PRINTS" id="PR00305">
    <property type="entry name" value="1433ZETA"/>
</dbReference>
<dbReference type="SMART" id="SM00101">
    <property type="entry name" value="14_3_3"/>
    <property type="match status" value="1"/>
</dbReference>
<dbReference type="SUPFAM" id="SSF48445">
    <property type="entry name" value="14-3-3 protein"/>
    <property type="match status" value="1"/>
</dbReference>
<dbReference type="PROSITE" id="PS00796">
    <property type="entry name" value="1433_1"/>
    <property type="match status" value="1"/>
</dbReference>
<dbReference type="PROSITE" id="PS00797">
    <property type="entry name" value="1433_2"/>
    <property type="match status" value="1"/>
</dbReference>
<accession>Q5F3W6</accession>
<proteinExistence type="evidence at protein level"/>
<reference key="1">
    <citation type="journal article" date="2005" name="Genome Biol.">
        <title>Full-length cDNAs from chicken bursal lymphocytes to facilitate gene function analysis.</title>
        <authorList>
            <person name="Caldwell R.B."/>
            <person name="Kierzek A.M."/>
            <person name="Arakawa H."/>
            <person name="Bezzubov Y."/>
            <person name="Zaim J."/>
            <person name="Fiedler P."/>
            <person name="Kutter S."/>
            <person name="Blagodatski A."/>
            <person name="Kostovska D."/>
            <person name="Koter M."/>
            <person name="Plachy J."/>
            <person name="Carninci P."/>
            <person name="Hayashizaki Y."/>
            <person name="Buerstedde J.-M."/>
        </authorList>
    </citation>
    <scope>NUCLEOTIDE SEQUENCE [LARGE SCALE MRNA]</scope>
    <source>
        <strain>CB</strain>
        <tissue>Bursa of Fabricius</tissue>
    </source>
</reference>